<name>AT5G2_SHEEP</name>
<sequence length="143" mass="15043">MYTCAKFVSTPSLIRRTSTLLSRSLSAVVVRRPETLTDESHSSLAVVPRPLTTSLTPSRSFQTSAISRDIDTAAKFIGAGAATVGVAGSGAGIGTVFGSLIIGYARNPSLKQQLFSYAILGFALSEAMGLFCLMVAFLILFAM</sequence>
<feature type="transit peptide" description="Mitochondrion">
    <location>
        <begin position="1"/>
        <end position="68"/>
    </location>
</feature>
<feature type="chain" id="PRO_0000002565" description="ATP synthase F(0) complex subunit C2, mitochondrial">
    <location>
        <begin position="69"/>
        <end position="143"/>
    </location>
</feature>
<feature type="transmembrane region" description="Helical" evidence="3">
    <location>
        <begin position="84"/>
        <end position="104"/>
    </location>
</feature>
<feature type="transmembrane region" description="Helical" evidence="3">
    <location>
        <begin position="119"/>
        <end position="139"/>
    </location>
</feature>
<feature type="site" description="Reversibly protonated during proton transport" evidence="1">
    <location>
        <position position="126"/>
    </location>
</feature>
<feature type="modified residue" description="N6,N6,N6-trimethyllysine" evidence="2">
    <location>
        <position position="111"/>
    </location>
</feature>
<dbReference type="EMBL" id="X69905">
    <property type="protein sequence ID" value="CAA49530.1"/>
    <property type="molecule type" value="mRNA"/>
</dbReference>
<dbReference type="PIR" id="S34069">
    <property type="entry name" value="S34069"/>
</dbReference>
<dbReference type="RefSeq" id="NP_001009468.1">
    <property type="nucleotide sequence ID" value="NM_001009468.1"/>
</dbReference>
<dbReference type="RefSeq" id="XP_012015298.1">
    <property type="nucleotide sequence ID" value="XM_012159908.5"/>
</dbReference>
<dbReference type="SMR" id="Q06056"/>
<dbReference type="STRING" id="9940.ENSOARP00000017601"/>
<dbReference type="PaxDb" id="9940-ENSOARP00000017601"/>
<dbReference type="Ensembl" id="ENSOART00025004941">
    <property type="protein sequence ID" value="ENSOARP00025002185"/>
    <property type="gene ID" value="ENSOARG00025003101"/>
</dbReference>
<dbReference type="Ensembl" id="ENSOART00180009431">
    <property type="protein sequence ID" value="ENSOARP00180004990"/>
    <property type="gene ID" value="ENSOARG00180005735"/>
</dbReference>
<dbReference type="Ensembl" id="ENSOART00215072564">
    <property type="protein sequence ID" value="ENSOARP00215039068"/>
    <property type="gene ID" value="ENSOARG00215042888"/>
</dbReference>
<dbReference type="Ensembl" id="ENSOART00220048064">
    <property type="protein sequence ID" value="ENSOARP00220025786"/>
    <property type="gene ID" value="ENSOARG00220028904"/>
</dbReference>
<dbReference type="Ensembl" id="ENSOART00225084991">
    <property type="protein sequence ID" value="ENSOARP00225044375"/>
    <property type="gene ID" value="ENSOARG00225051062"/>
</dbReference>
<dbReference type="GeneID" id="443542"/>
<dbReference type="KEGG" id="oas:443542"/>
<dbReference type="CTD" id="517"/>
<dbReference type="eggNOG" id="KOG3025">
    <property type="taxonomic scope" value="Eukaryota"/>
</dbReference>
<dbReference type="OrthoDB" id="438052at2759"/>
<dbReference type="Proteomes" id="UP000002356">
    <property type="component" value="Unplaced"/>
</dbReference>
<dbReference type="GO" id="GO:0031966">
    <property type="term" value="C:mitochondrial membrane"/>
    <property type="evidence" value="ECO:0007669"/>
    <property type="project" value="UniProtKB-SubCell"/>
</dbReference>
<dbReference type="GO" id="GO:0045259">
    <property type="term" value="C:proton-transporting ATP synthase complex"/>
    <property type="evidence" value="ECO:0007669"/>
    <property type="project" value="UniProtKB-KW"/>
</dbReference>
<dbReference type="GO" id="GO:0033177">
    <property type="term" value="C:proton-transporting two-sector ATPase complex, proton-transporting domain"/>
    <property type="evidence" value="ECO:0007669"/>
    <property type="project" value="InterPro"/>
</dbReference>
<dbReference type="GO" id="GO:0008289">
    <property type="term" value="F:lipid binding"/>
    <property type="evidence" value="ECO:0007669"/>
    <property type="project" value="UniProtKB-KW"/>
</dbReference>
<dbReference type="GO" id="GO:0015078">
    <property type="term" value="F:proton transmembrane transporter activity"/>
    <property type="evidence" value="ECO:0007669"/>
    <property type="project" value="InterPro"/>
</dbReference>
<dbReference type="GO" id="GO:0015986">
    <property type="term" value="P:proton motive force-driven ATP synthesis"/>
    <property type="evidence" value="ECO:0007669"/>
    <property type="project" value="InterPro"/>
</dbReference>
<dbReference type="CDD" id="cd18182">
    <property type="entry name" value="ATP-synt_Fo_c_ATP5G3"/>
    <property type="match status" value="1"/>
</dbReference>
<dbReference type="FunFam" id="1.20.20.10:FF:000003">
    <property type="entry name" value="Atp synthase f complex subunit mitochondrial"/>
    <property type="match status" value="1"/>
</dbReference>
<dbReference type="Gene3D" id="1.20.20.10">
    <property type="entry name" value="F1F0 ATP synthase subunit C"/>
    <property type="match status" value="1"/>
</dbReference>
<dbReference type="HAMAP" id="MF_01396">
    <property type="entry name" value="ATP_synth_c_bact"/>
    <property type="match status" value="1"/>
</dbReference>
<dbReference type="InterPro" id="IPR000454">
    <property type="entry name" value="ATP_synth_F0_csu"/>
</dbReference>
<dbReference type="InterPro" id="IPR020537">
    <property type="entry name" value="ATP_synth_F0_csu_DDCD_BS"/>
</dbReference>
<dbReference type="InterPro" id="IPR038662">
    <property type="entry name" value="ATP_synth_F0_csu_sf"/>
</dbReference>
<dbReference type="InterPro" id="IPR002379">
    <property type="entry name" value="ATPase_proteolipid_c-like_dom"/>
</dbReference>
<dbReference type="InterPro" id="IPR035921">
    <property type="entry name" value="F/V-ATP_Csub_sf"/>
</dbReference>
<dbReference type="PANTHER" id="PTHR10031">
    <property type="entry name" value="ATP SYNTHASE LIPID-BINDING PROTEIN, MITOCHONDRIAL"/>
    <property type="match status" value="1"/>
</dbReference>
<dbReference type="PANTHER" id="PTHR10031:SF0">
    <property type="entry name" value="ATPASE PROTEIN 9"/>
    <property type="match status" value="1"/>
</dbReference>
<dbReference type="Pfam" id="PF00137">
    <property type="entry name" value="ATP-synt_C"/>
    <property type="match status" value="1"/>
</dbReference>
<dbReference type="PRINTS" id="PR00124">
    <property type="entry name" value="ATPASEC"/>
</dbReference>
<dbReference type="SUPFAM" id="SSF81333">
    <property type="entry name" value="F1F0 ATP synthase subunit C"/>
    <property type="match status" value="1"/>
</dbReference>
<dbReference type="PROSITE" id="PS00605">
    <property type="entry name" value="ATPASE_C"/>
    <property type="match status" value="1"/>
</dbReference>
<gene>
    <name evidence="2" type="primary">ATP5MC2</name>
    <name type="synonym">ATP5G2</name>
</gene>
<reference key="1">
    <citation type="journal article" date="1993" name="Biochem. J.">
        <title>Characterization of the expressed genes for subunit c of mitochondrial ATP synthase in sheep with ceroid lipofuscinosis.</title>
        <authorList>
            <person name="Medd S.M."/>
            <person name="Walker J.E."/>
            <person name="Jolly R.D."/>
        </authorList>
    </citation>
    <scope>NUCLEOTIDE SEQUENCE [MRNA]</scope>
</reference>
<evidence type="ECO:0000250" key="1"/>
<evidence type="ECO:0000250" key="2">
    <source>
        <dbReference type="UniProtKB" id="Q06055"/>
    </source>
</evidence>
<evidence type="ECO:0000255" key="3"/>
<evidence type="ECO:0000305" key="4"/>
<keyword id="KW-0138">CF(0)</keyword>
<keyword id="KW-0375">Hydrogen ion transport</keyword>
<keyword id="KW-0406">Ion transport</keyword>
<keyword id="KW-0446">Lipid-binding</keyword>
<keyword id="KW-0472">Membrane</keyword>
<keyword id="KW-0488">Methylation</keyword>
<keyword id="KW-0496">Mitochondrion</keyword>
<keyword id="KW-1185">Reference proteome</keyword>
<keyword id="KW-0809">Transit peptide</keyword>
<keyword id="KW-0812">Transmembrane</keyword>
<keyword id="KW-1133">Transmembrane helix</keyword>
<keyword id="KW-0813">Transport</keyword>
<proteinExistence type="evidence at transcript level"/>
<comment type="function">
    <text>Mitochondrial membrane ATP synthase (F(1)F(0) ATP synthase or Complex V) produces ATP from ADP in the presence of a proton gradient across the membrane which is generated by electron transport complexes of the respiratory chain. F-type ATPases consist of two structural domains, F(1) - containing the extramembraneous catalytic core and F(0) - containing the membrane proton channel, linked together by a central stalk and a peripheral stalk. During catalysis, ATP synthesis in the catalytic domain of F(1) is coupled via a rotary mechanism of the central stalk subunits to proton translocation. Part of the complex F(0) domain. A homomeric c-ring of probably 10 subunits is part of the complex rotary element.</text>
</comment>
<comment type="subunit">
    <text evidence="2">F-type ATPases have 2 components, CF(1) - the catalytic core - and CF(0) - the membrane proton channel. CF(1) has five subunits: alpha(3), beta(3), gamma(1), delta(1), epsilon(1). CF(0) has three main subunits: a, b and c. Interacts with DNAJC30; interaction is direct.</text>
</comment>
<comment type="subcellular location">
    <subcellularLocation>
        <location>Mitochondrion membrane</location>
        <topology>Multi-pass membrane protein</topology>
    </subcellularLocation>
</comment>
<comment type="PTM">
    <text evidence="2">Trimethylated by ATPSCKMT at Lys-111. Methylation is required for proper incorporation of the C subunit into the ATP synthase complex and mitochondrial respiration.</text>
</comment>
<comment type="disease">
    <text>This protein is the major protein stored in the storage bodies of animals or humans affected with ceroid lipofuscinosis (Batten disease).</text>
</comment>
<comment type="miscellaneous">
    <text>There are three genes which encode the ATP synthase proteolipid and they specify precursors with different import sequences but identical mature proteins.</text>
</comment>
<comment type="similarity">
    <text evidence="4">Belongs to the ATPase C chain family.</text>
</comment>
<accession>Q06056</accession>
<protein>
    <recommendedName>
        <fullName evidence="4">ATP synthase F(0) complex subunit C2, mitochondrial</fullName>
    </recommendedName>
    <alternativeName>
        <fullName>ATP synthase lipid-binding protein</fullName>
    </alternativeName>
    <alternativeName>
        <fullName evidence="2">ATP synthase membrane subunit c locus 2</fullName>
    </alternativeName>
    <alternativeName>
        <fullName>ATP synthase proteolipid P2</fullName>
    </alternativeName>
    <alternativeName>
        <fullName>ATPase protein 9</fullName>
    </alternativeName>
    <alternativeName>
        <fullName>ATPase subunit c</fullName>
    </alternativeName>
</protein>
<organism>
    <name type="scientific">Ovis aries</name>
    <name type="common">Sheep</name>
    <dbReference type="NCBI Taxonomy" id="9940"/>
    <lineage>
        <taxon>Eukaryota</taxon>
        <taxon>Metazoa</taxon>
        <taxon>Chordata</taxon>
        <taxon>Craniata</taxon>
        <taxon>Vertebrata</taxon>
        <taxon>Euteleostomi</taxon>
        <taxon>Mammalia</taxon>
        <taxon>Eutheria</taxon>
        <taxon>Laurasiatheria</taxon>
        <taxon>Artiodactyla</taxon>
        <taxon>Ruminantia</taxon>
        <taxon>Pecora</taxon>
        <taxon>Bovidae</taxon>
        <taxon>Caprinae</taxon>
        <taxon>Ovis</taxon>
    </lineage>
</organism>